<sequence length="195" mass="21671">MSSKEQKTPDEQVLDQKEAAKGQQADAAPETADVADPRDERIAELEAQLSELQQRERDNMLRVRAEADNVRRRAEMDIEKAHKFAVEKFASEMLPVIDNLERALDTADKANESLAAMIEGVELTLKSLLDAVHKFGIEVVGDVGVPFNPEVHQAMTMLPSADHQPNHVMMVMQKGYTLNGRLLRPAMVAVSKAQD</sequence>
<keyword id="KW-0143">Chaperone</keyword>
<keyword id="KW-0963">Cytoplasm</keyword>
<keyword id="KW-1185">Reference proteome</keyword>
<keyword id="KW-0346">Stress response</keyword>
<reference key="1">
    <citation type="journal article" date="2004" name="Proc. Natl. Acad. Sci. U.S.A.">
        <title>Genome sequence of the enterobacterial phytopathogen Erwinia carotovora subsp. atroseptica and characterization of virulence factors.</title>
        <authorList>
            <person name="Bell K.S."/>
            <person name="Sebaihia M."/>
            <person name="Pritchard L."/>
            <person name="Holden M.T.G."/>
            <person name="Hyman L.J."/>
            <person name="Holeva M.C."/>
            <person name="Thomson N.R."/>
            <person name="Bentley S.D."/>
            <person name="Churcher L.J.C."/>
            <person name="Mungall K."/>
            <person name="Atkin R."/>
            <person name="Bason N."/>
            <person name="Brooks K."/>
            <person name="Chillingworth T."/>
            <person name="Clark K."/>
            <person name="Doggett J."/>
            <person name="Fraser A."/>
            <person name="Hance Z."/>
            <person name="Hauser H."/>
            <person name="Jagels K."/>
            <person name="Moule S."/>
            <person name="Norbertczak H."/>
            <person name="Ormond D."/>
            <person name="Price C."/>
            <person name="Quail M.A."/>
            <person name="Sanders M."/>
            <person name="Walker D."/>
            <person name="Whitehead S."/>
            <person name="Salmond G.P.C."/>
            <person name="Birch P.R.J."/>
            <person name="Parkhill J."/>
            <person name="Toth I.K."/>
        </authorList>
    </citation>
    <scope>NUCLEOTIDE SEQUENCE [LARGE SCALE GENOMIC DNA]</scope>
    <source>
        <strain>SCRI 1043 / ATCC BAA-672</strain>
    </source>
</reference>
<gene>
    <name evidence="1" type="primary">grpE</name>
    <name type="ordered locus">ECA0842</name>
</gene>
<protein>
    <recommendedName>
        <fullName evidence="1">Protein GrpE</fullName>
    </recommendedName>
    <alternativeName>
        <fullName evidence="1">HSP-70 cofactor</fullName>
    </alternativeName>
</protein>
<proteinExistence type="inferred from homology"/>
<evidence type="ECO:0000255" key="1">
    <source>
        <dbReference type="HAMAP-Rule" id="MF_01151"/>
    </source>
</evidence>
<evidence type="ECO:0000256" key="2">
    <source>
        <dbReference type="SAM" id="MobiDB-lite"/>
    </source>
</evidence>
<accession>Q6D8X9</accession>
<feature type="chain" id="PRO_0000113786" description="Protein GrpE">
    <location>
        <begin position="1"/>
        <end position="195"/>
    </location>
</feature>
<feature type="region of interest" description="Disordered" evidence="2">
    <location>
        <begin position="1"/>
        <end position="40"/>
    </location>
</feature>
<feature type="compositionally biased region" description="Basic and acidic residues" evidence="2">
    <location>
        <begin position="1"/>
        <end position="20"/>
    </location>
</feature>
<name>GRPE_PECAS</name>
<comment type="function">
    <text evidence="1">Participates actively in the response to hyperosmotic and heat shock by preventing the aggregation of stress-denatured proteins, in association with DnaK and GrpE. It is the nucleotide exchange factor for DnaK and may function as a thermosensor. Unfolded proteins bind initially to DnaJ; upon interaction with the DnaJ-bound protein, DnaK hydrolyzes its bound ATP, resulting in the formation of a stable complex. GrpE releases ADP from DnaK; ATP binding to DnaK triggers the release of the substrate protein, thus completing the reaction cycle. Several rounds of ATP-dependent interactions between DnaJ, DnaK and GrpE are required for fully efficient folding.</text>
</comment>
<comment type="subunit">
    <text evidence="1">Homodimer.</text>
</comment>
<comment type="subcellular location">
    <subcellularLocation>
        <location evidence="1">Cytoplasm</location>
    </subcellularLocation>
</comment>
<comment type="similarity">
    <text evidence="1">Belongs to the GrpE family.</text>
</comment>
<dbReference type="EMBL" id="BX950851">
    <property type="protein sequence ID" value="CAG73755.1"/>
    <property type="molecule type" value="Genomic_DNA"/>
</dbReference>
<dbReference type="RefSeq" id="WP_011092447.1">
    <property type="nucleotide sequence ID" value="NC_004547.2"/>
</dbReference>
<dbReference type="SMR" id="Q6D8X9"/>
<dbReference type="STRING" id="218491.ECA0842"/>
<dbReference type="KEGG" id="eca:ECA0842"/>
<dbReference type="PATRIC" id="fig|218491.5.peg.843"/>
<dbReference type="eggNOG" id="COG0576">
    <property type="taxonomic scope" value="Bacteria"/>
</dbReference>
<dbReference type="HOGENOM" id="CLU_057217_6_0_6"/>
<dbReference type="OrthoDB" id="9789811at2"/>
<dbReference type="Proteomes" id="UP000007966">
    <property type="component" value="Chromosome"/>
</dbReference>
<dbReference type="GO" id="GO:0005829">
    <property type="term" value="C:cytosol"/>
    <property type="evidence" value="ECO:0007669"/>
    <property type="project" value="TreeGrafter"/>
</dbReference>
<dbReference type="GO" id="GO:0000774">
    <property type="term" value="F:adenyl-nucleotide exchange factor activity"/>
    <property type="evidence" value="ECO:0007669"/>
    <property type="project" value="InterPro"/>
</dbReference>
<dbReference type="GO" id="GO:0042803">
    <property type="term" value="F:protein homodimerization activity"/>
    <property type="evidence" value="ECO:0007669"/>
    <property type="project" value="InterPro"/>
</dbReference>
<dbReference type="GO" id="GO:0051087">
    <property type="term" value="F:protein-folding chaperone binding"/>
    <property type="evidence" value="ECO:0007669"/>
    <property type="project" value="InterPro"/>
</dbReference>
<dbReference type="GO" id="GO:0051082">
    <property type="term" value="F:unfolded protein binding"/>
    <property type="evidence" value="ECO:0007669"/>
    <property type="project" value="TreeGrafter"/>
</dbReference>
<dbReference type="GO" id="GO:0006457">
    <property type="term" value="P:protein folding"/>
    <property type="evidence" value="ECO:0007669"/>
    <property type="project" value="InterPro"/>
</dbReference>
<dbReference type="CDD" id="cd00446">
    <property type="entry name" value="GrpE"/>
    <property type="match status" value="1"/>
</dbReference>
<dbReference type="FunFam" id="2.30.22.10:FF:000001">
    <property type="entry name" value="Protein GrpE"/>
    <property type="match status" value="1"/>
</dbReference>
<dbReference type="FunFam" id="3.90.20.20:FF:000001">
    <property type="entry name" value="Protein GrpE"/>
    <property type="match status" value="1"/>
</dbReference>
<dbReference type="Gene3D" id="3.90.20.20">
    <property type="match status" value="1"/>
</dbReference>
<dbReference type="Gene3D" id="2.30.22.10">
    <property type="entry name" value="Head domain of nucleotide exchange factor GrpE"/>
    <property type="match status" value="1"/>
</dbReference>
<dbReference type="HAMAP" id="MF_01151">
    <property type="entry name" value="GrpE"/>
    <property type="match status" value="1"/>
</dbReference>
<dbReference type="InterPro" id="IPR000740">
    <property type="entry name" value="GrpE"/>
</dbReference>
<dbReference type="InterPro" id="IPR013805">
    <property type="entry name" value="GrpE_coiled_coil"/>
</dbReference>
<dbReference type="InterPro" id="IPR009012">
    <property type="entry name" value="GrpE_head"/>
</dbReference>
<dbReference type="NCBIfam" id="NF010737">
    <property type="entry name" value="PRK14139.1"/>
    <property type="match status" value="1"/>
</dbReference>
<dbReference type="NCBIfam" id="NF010738">
    <property type="entry name" value="PRK14140.1"/>
    <property type="match status" value="1"/>
</dbReference>
<dbReference type="NCBIfam" id="NF010748">
    <property type="entry name" value="PRK14150.1"/>
    <property type="match status" value="1"/>
</dbReference>
<dbReference type="PANTHER" id="PTHR21237">
    <property type="entry name" value="GRPE PROTEIN"/>
    <property type="match status" value="1"/>
</dbReference>
<dbReference type="PANTHER" id="PTHR21237:SF23">
    <property type="entry name" value="GRPE PROTEIN HOMOLOG, MITOCHONDRIAL"/>
    <property type="match status" value="1"/>
</dbReference>
<dbReference type="Pfam" id="PF01025">
    <property type="entry name" value="GrpE"/>
    <property type="match status" value="1"/>
</dbReference>
<dbReference type="PRINTS" id="PR00773">
    <property type="entry name" value="GRPEPROTEIN"/>
</dbReference>
<dbReference type="SUPFAM" id="SSF58014">
    <property type="entry name" value="Coiled-coil domain of nucleotide exchange factor GrpE"/>
    <property type="match status" value="1"/>
</dbReference>
<dbReference type="SUPFAM" id="SSF51064">
    <property type="entry name" value="Head domain of nucleotide exchange factor GrpE"/>
    <property type="match status" value="1"/>
</dbReference>
<dbReference type="PROSITE" id="PS01071">
    <property type="entry name" value="GRPE"/>
    <property type="match status" value="1"/>
</dbReference>
<organism>
    <name type="scientific">Pectobacterium atrosepticum (strain SCRI 1043 / ATCC BAA-672)</name>
    <name type="common">Erwinia carotovora subsp. atroseptica</name>
    <dbReference type="NCBI Taxonomy" id="218491"/>
    <lineage>
        <taxon>Bacteria</taxon>
        <taxon>Pseudomonadati</taxon>
        <taxon>Pseudomonadota</taxon>
        <taxon>Gammaproteobacteria</taxon>
        <taxon>Enterobacterales</taxon>
        <taxon>Pectobacteriaceae</taxon>
        <taxon>Pectobacterium</taxon>
    </lineage>
</organism>